<reference key="1">
    <citation type="journal article" date="2002" name="Nature">
        <title>The genome sequence of Schizosaccharomyces pombe.</title>
        <authorList>
            <person name="Wood V."/>
            <person name="Gwilliam R."/>
            <person name="Rajandream M.A."/>
            <person name="Lyne M.H."/>
            <person name="Lyne R."/>
            <person name="Stewart A."/>
            <person name="Sgouros J.G."/>
            <person name="Peat N."/>
            <person name="Hayles J."/>
            <person name="Baker S.G."/>
            <person name="Basham D."/>
            <person name="Bowman S."/>
            <person name="Brooks K."/>
            <person name="Brown D."/>
            <person name="Brown S."/>
            <person name="Chillingworth T."/>
            <person name="Churcher C.M."/>
            <person name="Collins M."/>
            <person name="Connor R."/>
            <person name="Cronin A."/>
            <person name="Davis P."/>
            <person name="Feltwell T."/>
            <person name="Fraser A."/>
            <person name="Gentles S."/>
            <person name="Goble A."/>
            <person name="Hamlin N."/>
            <person name="Harris D.E."/>
            <person name="Hidalgo J."/>
            <person name="Hodgson G."/>
            <person name="Holroyd S."/>
            <person name="Hornsby T."/>
            <person name="Howarth S."/>
            <person name="Huckle E.J."/>
            <person name="Hunt S."/>
            <person name="Jagels K."/>
            <person name="James K.D."/>
            <person name="Jones L."/>
            <person name="Jones M."/>
            <person name="Leather S."/>
            <person name="McDonald S."/>
            <person name="McLean J."/>
            <person name="Mooney P."/>
            <person name="Moule S."/>
            <person name="Mungall K.L."/>
            <person name="Murphy L.D."/>
            <person name="Niblett D."/>
            <person name="Odell C."/>
            <person name="Oliver K."/>
            <person name="O'Neil S."/>
            <person name="Pearson D."/>
            <person name="Quail M.A."/>
            <person name="Rabbinowitsch E."/>
            <person name="Rutherford K.M."/>
            <person name="Rutter S."/>
            <person name="Saunders D."/>
            <person name="Seeger K."/>
            <person name="Sharp S."/>
            <person name="Skelton J."/>
            <person name="Simmonds M.N."/>
            <person name="Squares R."/>
            <person name="Squares S."/>
            <person name="Stevens K."/>
            <person name="Taylor K."/>
            <person name="Taylor R.G."/>
            <person name="Tivey A."/>
            <person name="Walsh S.V."/>
            <person name="Warren T."/>
            <person name="Whitehead S."/>
            <person name="Woodward J.R."/>
            <person name="Volckaert G."/>
            <person name="Aert R."/>
            <person name="Robben J."/>
            <person name="Grymonprez B."/>
            <person name="Weltjens I."/>
            <person name="Vanstreels E."/>
            <person name="Rieger M."/>
            <person name="Schaefer M."/>
            <person name="Mueller-Auer S."/>
            <person name="Gabel C."/>
            <person name="Fuchs M."/>
            <person name="Duesterhoeft A."/>
            <person name="Fritzc C."/>
            <person name="Holzer E."/>
            <person name="Moestl D."/>
            <person name="Hilbert H."/>
            <person name="Borzym K."/>
            <person name="Langer I."/>
            <person name="Beck A."/>
            <person name="Lehrach H."/>
            <person name="Reinhardt R."/>
            <person name="Pohl T.M."/>
            <person name="Eger P."/>
            <person name="Zimmermann W."/>
            <person name="Wedler H."/>
            <person name="Wambutt R."/>
            <person name="Purnelle B."/>
            <person name="Goffeau A."/>
            <person name="Cadieu E."/>
            <person name="Dreano S."/>
            <person name="Gloux S."/>
            <person name="Lelaure V."/>
            <person name="Mottier S."/>
            <person name="Galibert F."/>
            <person name="Aves S.J."/>
            <person name="Xiang Z."/>
            <person name="Hunt C."/>
            <person name="Moore K."/>
            <person name="Hurst S.M."/>
            <person name="Lucas M."/>
            <person name="Rochet M."/>
            <person name="Gaillardin C."/>
            <person name="Tallada V.A."/>
            <person name="Garzon A."/>
            <person name="Thode G."/>
            <person name="Daga R.R."/>
            <person name="Cruzado L."/>
            <person name="Jimenez J."/>
            <person name="Sanchez M."/>
            <person name="del Rey F."/>
            <person name="Benito J."/>
            <person name="Dominguez A."/>
            <person name="Revuelta J.L."/>
            <person name="Moreno S."/>
            <person name="Armstrong J."/>
            <person name="Forsburg S.L."/>
            <person name="Cerutti L."/>
            <person name="Lowe T."/>
            <person name="McCombie W.R."/>
            <person name="Paulsen I."/>
            <person name="Potashkin J."/>
            <person name="Shpakovski G.V."/>
            <person name="Ussery D."/>
            <person name="Barrell B.G."/>
            <person name="Nurse P."/>
        </authorList>
    </citation>
    <scope>NUCLEOTIDE SEQUENCE [LARGE SCALE GENOMIC DNA]</scope>
    <source>
        <strain>972 / ATCC 24843</strain>
    </source>
</reference>
<reference key="2">
    <citation type="journal article" date="2004" name="Mol. Genet. Genomics">
        <title>Two-hybrid search for proteins that interact with Sad1 and Kms1, two membrane-bound components of the spindle pole body in fission yeast.</title>
        <authorList>
            <person name="Miki F."/>
            <person name="Kurabayashi A."/>
            <person name="Tange Y."/>
            <person name="Okazaki K."/>
            <person name="Shimanuki M."/>
            <person name="Niwa O."/>
        </authorList>
    </citation>
    <scope>INTERACTION WITH SAD1</scope>
</reference>
<reference key="3">
    <citation type="journal article" date="2008" name="J. Proteome Res.">
        <title>Phosphoproteome analysis of fission yeast.</title>
        <authorList>
            <person name="Wilson-Grady J.T."/>
            <person name="Villen J."/>
            <person name="Gygi S.P."/>
        </authorList>
    </citation>
    <scope>PHOSPHORYLATION [LARGE SCALE ANALYSIS] AT SER-204 AND SER-231</scope>
    <scope>IDENTIFICATION BY MASS SPECTROMETRY</scope>
</reference>
<gene>
    <name type="ORF">SPBC3H7.13</name>
</gene>
<organism>
    <name type="scientific">Schizosaccharomyces pombe (strain 972 / ATCC 24843)</name>
    <name type="common">Fission yeast</name>
    <dbReference type="NCBI Taxonomy" id="284812"/>
    <lineage>
        <taxon>Eukaryota</taxon>
        <taxon>Fungi</taxon>
        <taxon>Dikarya</taxon>
        <taxon>Ascomycota</taxon>
        <taxon>Taphrinomycotina</taxon>
        <taxon>Schizosaccharomycetes</taxon>
        <taxon>Schizosaccharomycetales</taxon>
        <taxon>Schizosaccharomycetaceae</taxon>
        <taxon>Schizosaccharomyces</taxon>
    </lineage>
</organism>
<dbReference type="EMBL" id="CU329671">
    <property type="protein sequence ID" value="CAA20309.1"/>
    <property type="molecule type" value="Genomic_DNA"/>
</dbReference>
<dbReference type="PIR" id="T40402">
    <property type="entry name" value="T40402"/>
</dbReference>
<dbReference type="SMR" id="O74388"/>
<dbReference type="BioGRID" id="277528">
    <property type="interactions" value="86"/>
</dbReference>
<dbReference type="IntAct" id="O74388">
    <property type="interactions" value="1"/>
</dbReference>
<dbReference type="STRING" id="284812.O74388"/>
<dbReference type="iPTMnet" id="O74388"/>
<dbReference type="PaxDb" id="4896-SPBC3H7.13.1"/>
<dbReference type="EnsemblFungi" id="SPBC3H7.13.1">
    <property type="protein sequence ID" value="SPBC3H7.13.1:pep"/>
    <property type="gene ID" value="SPBC3H7.13"/>
</dbReference>
<dbReference type="KEGG" id="spo:2541013"/>
<dbReference type="PomBase" id="SPBC3H7.13"/>
<dbReference type="VEuPathDB" id="FungiDB:SPBC3H7.13"/>
<dbReference type="eggNOG" id="KOG3872">
    <property type="taxonomic scope" value="Eukaryota"/>
</dbReference>
<dbReference type="HOGENOM" id="CLU_858315_0_0_1"/>
<dbReference type="InParanoid" id="O74388"/>
<dbReference type="OMA" id="GRHTNKS"/>
<dbReference type="PRO" id="PR:O74388"/>
<dbReference type="Proteomes" id="UP000002485">
    <property type="component" value="Chromosome II"/>
</dbReference>
<dbReference type="GO" id="GO:0032153">
    <property type="term" value="C:cell division site"/>
    <property type="evidence" value="ECO:0007005"/>
    <property type="project" value="PomBase"/>
</dbReference>
<dbReference type="GO" id="GO:0051286">
    <property type="term" value="C:cell tip"/>
    <property type="evidence" value="ECO:0007005"/>
    <property type="project" value="PomBase"/>
</dbReference>
<dbReference type="GO" id="GO:0005829">
    <property type="term" value="C:cytosol"/>
    <property type="evidence" value="ECO:0007005"/>
    <property type="project" value="PomBase"/>
</dbReference>
<dbReference type="GO" id="GO:0090443">
    <property type="term" value="C:FAR/SIN/STRIPAK complex"/>
    <property type="evidence" value="ECO:0000314"/>
    <property type="project" value="PomBase"/>
</dbReference>
<dbReference type="GO" id="GO:0044732">
    <property type="term" value="C:mitotic spindle pole body"/>
    <property type="evidence" value="ECO:0000269"/>
    <property type="project" value="PomBase"/>
</dbReference>
<dbReference type="GO" id="GO:0005634">
    <property type="term" value="C:nucleus"/>
    <property type="evidence" value="ECO:0007669"/>
    <property type="project" value="UniProtKB-SubCell"/>
</dbReference>
<dbReference type="GO" id="GO:0140475">
    <property type="term" value="F:spindle pole body anchor activity"/>
    <property type="evidence" value="ECO:0000269"/>
    <property type="project" value="PomBase"/>
</dbReference>
<dbReference type="GO" id="GO:0061509">
    <property type="term" value="P:asymmetric protein localization to old mitotic spindle pole body"/>
    <property type="evidence" value="ECO:0000315"/>
    <property type="project" value="PomBase"/>
</dbReference>
<dbReference type="GO" id="GO:0031030">
    <property type="term" value="P:negative regulation of septation initiation signaling"/>
    <property type="evidence" value="ECO:0000315"/>
    <property type="project" value="PomBase"/>
</dbReference>
<dbReference type="CDD" id="cd22679">
    <property type="entry name" value="FHA_SLMAP"/>
    <property type="match status" value="1"/>
</dbReference>
<dbReference type="Gene3D" id="2.60.200.20">
    <property type="match status" value="1"/>
</dbReference>
<dbReference type="InterPro" id="IPR051176">
    <property type="entry name" value="Cent_Immune-Sig_Mod"/>
</dbReference>
<dbReference type="InterPro" id="IPR000253">
    <property type="entry name" value="FHA_dom"/>
</dbReference>
<dbReference type="InterPro" id="IPR008984">
    <property type="entry name" value="SMAD_FHA_dom_sf"/>
</dbReference>
<dbReference type="PANTHER" id="PTHR15715">
    <property type="entry name" value="CENTROSOMAL PROTEIN OF 170 KDA"/>
    <property type="match status" value="1"/>
</dbReference>
<dbReference type="PANTHER" id="PTHR15715:SF37">
    <property type="entry name" value="LD47843P"/>
    <property type="match status" value="1"/>
</dbReference>
<dbReference type="Pfam" id="PF00498">
    <property type="entry name" value="FHA"/>
    <property type="match status" value="1"/>
</dbReference>
<dbReference type="SMART" id="SM00240">
    <property type="entry name" value="FHA"/>
    <property type="match status" value="1"/>
</dbReference>
<dbReference type="SUPFAM" id="SSF49879">
    <property type="entry name" value="SMAD/FHA domain"/>
    <property type="match status" value="1"/>
</dbReference>
<dbReference type="PROSITE" id="PS50006">
    <property type="entry name" value="FHA_DOMAIN"/>
    <property type="match status" value="1"/>
</dbReference>
<evidence type="ECO:0000255" key="1">
    <source>
        <dbReference type="PROSITE-ProRule" id="PRU00086"/>
    </source>
</evidence>
<evidence type="ECO:0000256" key="2">
    <source>
        <dbReference type="SAM" id="MobiDB-lite"/>
    </source>
</evidence>
<evidence type="ECO:0000269" key="3">
    <source>
    </source>
</evidence>
<evidence type="ECO:0000269" key="4">
    <source>
    </source>
</evidence>
<keyword id="KW-0539">Nucleus</keyword>
<keyword id="KW-0597">Phosphoprotein</keyword>
<keyword id="KW-1185">Reference proteome</keyword>
<comment type="subunit">
    <text evidence="3">Interacts with sad1.</text>
</comment>
<comment type="subcellular location">
    <subcellularLocation>
        <location>Nucleus</location>
    </subcellularLocation>
</comment>
<protein>
    <recommendedName>
        <fullName>Uncharacterized protein C3H7.13</fullName>
    </recommendedName>
</protein>
<accession>O74388</accession>
<feature type="chain" id="PRO_0000116864" description="Uncharacterized protein C3H7.13">
    <location>
        <begin position="1"/>
        <end position="301"/>
    </location>
</feature>
<feature type="domain" description="FHA" evidence="1">
    <location>
        <begin position="27"/>
        <end position="85"/>
    </location>
</feature>
<feature type="region of interest" description="Disordered" evidence="2">
    <location>
        <begin position="187"/>
        <end position="236"/>
    </location>
</feature>
<feature type="compositionally biased region" description="Basic and acidic residues" evidence="2">
    <location>
        <begin position="216"/>
        <end position="226"/>
    </location>
</feature>
<feature type="modified residue" description="Phosphoserine" evidence="4">
    <location>
        <position position="204"/>
    </location>
</feature>
<feature type="modified residue" description="Phosphoserine" evidence="4">
    <location>
        <position position="231"/>
    </location>
</feature>
<proteinExistence type="evidence at protein level"/>
<name>YNVD_SCHPO</name>
<sequence length="301" mass="33904">MSAVITLTPLNESFQTKKLVISPSTIYKIGRHTNKSTSPSPSNLFFNSKVLSRQHAELWLDKDTLSVYIRDVKSSNGTFVNETRLSPENKPSAPCKLNSGDIVDFGVDIYNEDEIVHQKVSAQVRIVVRGATFATTPARSLDSEVMLDSIMRQMVFQYQRCVELNENLESLENGVEEVSKSLSWLETGKTRDNRNNHHYSRKSSPHISSLAVPSTKHLDGERDRNLKRSTSPLSSSPFVTEAALNEAELAKTNLEAWKARAFTAEARLSSKNKSWQEKKYLVLSPFFIAVAGIIVYMGYWR</sequence>